<dbReference type="EC" id="3.1.-.-" evidence="1"/>
<dbReference type="EMBL" id="AP006716">
    <property type="protein sequence ID" value="BAE04655.1"/>
    <property type="molecule type" value="Genomic_DNA"/>
</dbReference>
<dbReference type="RefSeq" id="WP_011275642.1">
    <property type="nucleotide sequence ID" value="NC_007168.1"/>
</dbReference>
<dbReference type="SMR" id="Q4L6S0"/>
<dbReference type="GeneID" id="93780746"/>
<dbReference type="KEGG" id="sha:SH1346"/>
<dbReference type="eggNOG" id="COG0319">
    <property type="taxonomic scope" value="Bacteria"/>
</dbReference>
<dbReference type="HOGENOM" id="CLU_106710_3_0_9"/>
<dbReference type="OrthoDB" id="9807740at2"/>
<dbReference type="Proteomes" id="UP000000543">
    <property type="component" value="Chromosome"/>
</dbReference>
<dbReference type="GO" id="GO:0005737">
    <property type="term" value="C:cytoplasm"/>
    <property type="evidence" value="ECO:0007669"/>
    <property type="project" value="UniProtKB-SubCell"/>
</dbReference>
<dbReference type="GO" id="GO:0004222">
    <property type="term" value="F:metalloendopeptidase activity"/>
    <property type="evidence" value="ECO:0007669"/>
    <property type="project" value="InterPro"/>
</dbReference>
<dbReference type="GO" id="GO:0004521">
    <property type="term" value="F:RNA endonuclease activity"/>
    <property type="evidence" value="ECO:0007669"/>
    <property type="project" value="UniProtKB-UniRule"/>
</dbReference>
<dbReference type="GO" id="GO:0008270">
    <property type="term" value="F:zinc ion binding"/>
    <property type="evidence" value="ECO:0007669"/>
    <property type="project" value="UniProtKB-UniRule"/>
</dbReference>
<dbReference type="GO" id="GO:0006364">
    <property type="term" value="P:rRNA processing"/>
    <property type="evidence" value="ECO:0007669"/>
    <property type="project" value="UniProtKB-UniRule"/>
</dbReference>
<dbReference type="Gene3D" id="3.40.390.30">
    <property type="entry name" value="Metalloproteases ('zincins'), catalytic domain"/>
    <property type="match status" value="1"/>
</dbReference>
<dbReference type="HAMAP" id="MF_00009">
    <property type="entry name" value="Endoribonucl_YbeY"/>
    <property type="match status" value="1"/>
</dbReference>
<dbReference type="InterPro" id="IPR023091">
    <property type="entry name" value="MetalPrtase_cat_dom_sf_prd"/>
</dbReference>
<dbReference type="InterPro" id="IPR002036">
    <property type="entry name" value="YbeY"/>
</dbReference>
<dbReference type="InterPro" id="IPR020549">
    <property type="entry name" value="YbeY_CS"/>
</dbReference>
<dbReference type="NCBIfam" id="TIGR00043">
    <property type="entry name" value="rRNA maturation RNase YbeY"/>
    <property type="match status" value="1"/>
</dbReference>
<dbReference type="PANTHER" id="PTHR46986">
    <property type="entry name" value="ENDORIBONUCLEASE YBEY, CHLOROPLASTIC"/>
    <property type="match status" value="1"/>
</dbReference>
<dbReference type="PANTHER" id="PTHR46986:SF1">
    <property type="entry name" value="ENDORIBONUCLEASE YBEY, CHLOROPLASTIC"/>
    <property type="match status" value="1"/>
</dbReference>
<dbReference type="Pfam" id="PF02130">
    <property type="entry name" value="YbeY"/>
    <property type="match status" value="1"/>
</dbReference>
<dbReference type="SUPFAM" id="SSF55486">
    <property type="entry name" value="Metalloproteases ('zincins'), catalytic domain"/>
    <property type="match status" value="1"/>
</dbReference>
<dbReference type="PROSITE" id="PS01306">
    <property type="entry name" value="UPF0054"/>
    <property type="match status" value="1"/>
</dbReference>
<organism>
    <name type="scientific">Staphylococcus haemolyticus (strain JCSC1435)</name>
    <dbReference type="NCBI Taxonomy" id="279808"/>
    <lineage>
        <taxon>Bacteria</taxon>
        <taxon>Bacillati</taxon>
        <taxon>Bacillota</taxon>
        <taxon>Bacilli</taxon>
        <taxon>Bacillales</taxon>
        <taxon>Staphylococcaceae</taxon>
        <taxon>Staphylococcus</taxon>
    </lineage>
</organism>
<evidence type="ECO:0000255" key="1">
    <source>
        <dbReference type="HAMAP-Rule" id="MF_00009"/>
    </source>
</evidence>
<sequence>MFTIDFNDHTDLVNESWYHQIEDLLNFAKEQEQINEDAELSVTFVDKNEIQEINKTYRDKDKVTDVISFALEEDEPEIVGLDMPRVLGDIIICTNVAEEQADSFGHSFERELGFLALHGFLHLLGYDHMNEEDEKVMFSRQDTILNAYGLTRD</sequence>
<name>YBEY_STAHJ</name>
<comment type="function">
    <text evidence="1">Single strand-specific metallo-endoribonuclease involved in late-stage 70S ribosome quality control and in maturation of the 3' terminus of the 16S rRNA.</text>
</comment>
<comment type="cofactor">
    <cofactor evidence="1">
        <name>Zn(2+)</name>
        <dbReference type="ChEBI" id="CHEBI:29105"/>
    </cofactor>
    <text evidence="1">Binds 1 zinc ion.</text>
</comment>
<comment type="subcellular location">
    <subcellularLocation>
        <location evidence="1">Cytoplasm</location>
    </subcellularLocation>
</comment>
<comment type="similarity">
    <text evidence="1">Belongs to the endoribonuclease YbeY family.</text>
</comment>
<accession>Q4L6S0</accession>
<protein>
    <recommendedName>
        <fullName evidence="1">Endoribonuclease YbeY</fullName>
        <ecNumber evidence="1">3.1.-.-</ecNumber>
    </recommendedName>
</protein>
<reference key="1">
    <citation type="journal article" date="2005" name="J. Bacteriol.">
        <title>Whole-genome sequencing of Staphylococcus haemolyticus uncovers the extreme plasticity of its genome and the evolution of human-colonizing staphylococcal species.</title>
        <authorList>
            <person name="Takeuchi F."/>
            <person name="Watanabe S."/>
            <person name="Baba T."/>
            <person name="Yuzawa H."/>
            <person name="Ito T."/>
            <person name="Morimoto Y."/>
            <person name="Kuroda M."/>
            <person name="Cui L."/>
            <person name="Takahashi M."/>
            <person name="Ankai A."/>
            <person name="Baba S."/>
            <person name="Fukui S."/>
            <person name="Lee J.C."/>
            <person name="Hiramatsu K."/>
        </authorList>
    </citation>
    <scope>NUCLEOTIDE SEQUENCE [LARGE SCALE GENOMIC DNA]</scope>
    <source>
        <strain>JCSC1435</strain>
    </source>
</reference>
<keyword id="KW-0963">Cytoplasm</keyword>
<keyword id="KW-0255">Endonuclease</keyword>
<keyword id="KW-0378">Hydrolase</keyword>
<keyword id="KW-0479">Metal-binding</keyword>
<keyword id="KW-0540">Nuclease</keyword>
<keyword id="KW-0690">Ribosome biogenesis</keyword>
<keyword id="KW-0698">rRNA processing</keyword>
<keyword id="KW-0862">Zinc</keyword>
<feature type="chain" id="PRO_0000284322" description="Endoribonuclease YbeY">
    <location>
        <begin position="1"/>
        <end position="153"/>
    </location>
</feature>
<feature type="binding site" evidence="1">
    <location>
        <position position="118"/>
    </location>
    <ligand>
        <name>Zn(2+)</name>
        <dbReference type="ChEBI" id="CHEBI:29105"/>
        <note>catalytic</note>
    </ligand>
</feature>
<feature type="binding site" evidence="1">
    <location>
        <position position="122"/>
    </location>
    <ligand>
        <name>Zn(2+)</name>
        <dbReference type="ChEBI" id="CHEBI:29105"/>
        <note>catalytic</note>
    </ligand>
</feature>
<feature type="binding site" evidence="1">
    <location>
        <position position="128"/>
    </location>
    <ligand>
        <name>Zn(2+)</name>
        <dbReference type="ChEBI" id="CHEBI:29105"/>
        <note>catalytic</note>
    </ligand>
</feature>
<proteinExistence type="inferred from homology"/>
<gene>
    <name evidence="1" type="primary">ybeY</name>
    <name type="ordered locus">SH1346</name>
</gene>